<evidence type="ECO:0000250" key="1"/>
<evidence type="ECO:0000250" key="2">
    <source>
        <dbReference type="UniProtKB" id="P0AEE8"/>
    </source>
</evidence>
<evidence type="ECO:0000250" key="3">
    <source>
        <dbReference type="UniProtKB" id="P0DMP4"/>
    </source>
</evidence>
<evidence type="ECO:0000303" key="4">
    <source>
    </source>
</evidence>
<evidence type="ECO:0000305" key="5"/>
<reference key="1">
    <citation type="journal article" date="2001" name="Nature">
        <title>Complete genome sequence of Salmonella enterica serovar Typhimurium LT2.</title>
        <authorList>
            <person name="McClelland M."/>
            <person name="Sanderson K.E."/>
            <person name="Spieth J."/>
            <person name="Clifton S.W."/>
            <person name="Latreille P."/>
            <person name="Courtney L."/>
            <person name="Porwollik S."/>
            <person name="Ali J."/>
            <person name="Dante M."/>
            <person name="Du F."/>
            <person name="Hou S."/>
            <person name="Layman D."/>
            <person name="Leonard S."/>
            <person name="Nguyen C."/>
            <person name="Scott K."/>
            <person name="Holmes A."/>
            <person name="Grewal N."/>
            <person name="Mulvaney E."/>
            <person name="Ryan E."/>
            <person name="Sun H."/>
            <person name="Florea L."/>
            <person name="Miller W."/>
            <person name="Stoneking T."/>
            <person name="Nhan M."/>
            <person name="Waterston R."/>
            <person name="Wilson R.K."/>
        </authorList>
    </citation>
    <scope>NUCLEOTIDE SEQUENCE [LARGE SCALE GENOMIC DNA]</scope>
    <source>
        <strain>LT2 / SGSC1412 / ATCC 700720</strain>
    </source>
</reference>
<reference key="2">
    <citation type="journal article" date="2003" name="Nucleic Acids Res.">
        <title>A nomenclature for restriction enzymes, DNA methyltransferases, homing endonucleases and their genes.</title>
        <authorList>
            <person name="Roberts R.J."/>
            <person name="Belfort M."/>
            <person name="Bestor T."/>
            <person name="Bhagwat A.S."/>
            <person name="Bickle T.A."/>
            <person name="Bitinaite J."/>
            <person name="Blumenthal R.M."/>
            <person name="Degtyarev S.K."/>
            <person name="Dryden D.T."/>
            <person name="Dybvig K."/>
            <person name="Firman K."/>
            <person name="Gromova E.S."/>
            <person name="Gumport R.I."/>
            <person name="Halford S.E."/>
            <person name="Hattman S."/>
            <person name="Heitman J."/>
            <person name="Hornby D.P."/>
            <person name="Janulaitis A."/>
            <person name="Jeltsch A."/>
            <person name="Josephsen J."/>
            <person name="Kiss A."/>
            <person name="Klaenhammer T.R."/>
            <person name="Kobayashi I."/>
            <person name="Kong H."/>
            <person name="Krueger D.H."/>
            <person name="Lacks S."/>
            <person name="Marinus M.G."/>
            <person name="Miyahara M."/>
            <person name="Morgan R.D."/>
            <person name="Murray N.E."/>
            <person name="Nagaraja V."/>
            <person name="Piekarowicz A."/>
            <person name="Pingoud A."/>
            <person name="Raleigh E."/>
            <person name="Rao D.N."/>
            <person name="Reich N."/>
            <person name="Repin V.E."/>
            <person name="Selker E.U."/>
            <person name="Shaw P.C."/>
            <person name="Stein D.C."/>
            <person name="Stoddard B.L."/>
            <person name="Szybalski W."/>
            <person name="Trautner T.A."/>
            <person name="Van Etten J.L."/>
            <person name="Vitor J.M."/>
            <person name="Wilson G.G."/>
            <person name="Xu S.Y."/>
        </authorList>
    </citation>
    <scope>NOMENCLATURE</scope>
    <scope>SUBTYPE</scope>
</reference>
<dbReference type="EC" id="2.1.1.72"/>
<dbReference type="EMBL" id="AE006468">
    <property type="protein sequence ID" value="AAL22346.1"/>
    <property type="molecule type" value="Genomic_DNA"/>
</dbReference>
<dbReference type="RefSeq" id="NP_462387.1">
    <property type="nucleotide sequence ID" value="NC_003197.2"/>
</dbReference>
<dbReference type="RefSeq" id="WP_000742132.1">
    <property type="nucleotide sequence ID" value="NC_003197.2"/>
</dbReference>
<dbReference type="SMR" id="P0DMP3"/>
<dbReference type="STRING" id="99287.STM3484"/>
<dbReference type="PaxDb" id="99287-STM3484"/>
<dbReference type="GeneID" id="1255007"/>
<dbReference type="KEGG" id="stm:STM3484"/>
<dbReference type="PATRIC" id="fig|99287.12.peg.3682"/>
<dbReference type="HOGENOM" id="CLU_063430_0_1_6"/>
<dbReference type="OMA" id="YMNRHGF"/>
<dbReference type="PhylomeDB" id="P0DMP3"/>
<dbReference type="BioCyc" id="SENT99287:STM3484-MONOMER"/>
<dbReference type="Proteomes" id="UP000001014">
    <property type="component" value="Chromosome"/>
</dbReference>
<dbReference type="GO" id="GO:1904047">
    <property type="term" value="F:S-adenosyl-L-methionine binding"/>
    <property type="evidence" value="ECO:0000318"/>
    <property type="project" value="GO_Central"/>
</dbReference>
<dbReference type="GO" id="GO:0043565">
    <property type="term" value="F:sequence-specific DNA binding"/>
    <property type="evidence" value="ECO:0000318"/>
    <property type="project" value="GO_Central"/>
</dbReference>
<dbReference type="GO" id="GO:0009007">
    <property type="term" value="F:site-specific DNA-methyltransferase (adenine-specific) activity"/>
    <property type="evidence" value="ECO:0000318"/>
    <property type="project" value="GO_Central"/>
</dbReference>
<dbReference type="GO" id="GO:0006260">
    <property type="term" value="P:DNA replication"/>
    <property type="evidence" value="ECO:0007669"/>
    <property type="project" value="UniProtKB-KW"/>
</dbReference>
<dbReference type="GO" id="GO:0009307">
    <property type="term" value="P:DNA restriction-modification system"/>
    <property type="evidence" value="ECO:0007669"/>
    <property type="project" value="InterPro"/>
</dbReference>
<dbReference type="GO" id="GO:0032259">
    <property type="term" value="P:methylation"/>
    <property type="evidence" value="ECO:0007669"/>
    <property type="project" value="UniProtKB-KW"/>
</dbReference>
<dbReference type="GO" id="GO:0006298">
    <property type="term" value="P:mismatch repair"/>
    <property type="evidence" value="ECO:0000318"/>
    <property type="project" value="GO_Central"/>
</dbReference>
<dbReference type="FunFam" id="1.10.1020.10:FF:000001">
    <property type="entry name" value="Site-specific DNA-methyltransferase (adenine-specific)"/>
    <property type="match status" value="1"/>
</dbReference>
<dbReference type="Gene3D" id="1.10.1020.10">
    <property type="entry name" value="Adenine-specific Methyltransferase, Domain 2"/>
    <property type="match status" value="1"/>
</dbReference>
<dbReference type="Gene3D" id="3.40.50.150">
    <property type="entry name" value="Vaccinia Virus protein VP39"/>
    <property type="match status" value="1"/>
</dbReference>
<dbReference type="InterPro" id="IPR023095">
    <property type="entry name" value="Ade_MeTrfase_dom_2"/>
</dbReference>
<dbReference type="InterPro" id="IPR002052">
    <property type="entry name" value="DNA_methylase_N6_adenine_CS"/>
</dbReference>
<dbReference type="InterPro" id="IPR012263">
    <property type="entry name" value="M_m6A_EcoRV"/>
</dbReference>
<dbReference type="InterPro" id="IPR012327">
    <property type="entry name" value="MeTrfase_D12"/>
</dbReference>
<dbReference type="InterPro" id="IPR029063">
    <property type="entry name" value="SAM-dependent_MTases_sf"/>
</dbReference>
<dbReference type="NCBIfam" id="TIGR00571">
    <property type="entry name" value="dam"/>
    <property type="match status" value="1"/>
</dbReference>
<dbReference type="NCBIfam" id="NF008152">
    <property type="entry name" value="PRK10904.1"/>
    <property type="match status" value="1"/>
</dbReference>
<dbReference type="PANTHER" id="PTHR30481">
    <property type="entry name" value="DNA ADENINE METHYLASE"/>
    <property type="match status" value="1"/>
</dbReference>
<dbReference type="PANTHER" id="PTHR30481:SF3">
    <property type="entry name" value="DNA ADENINE METHYLASE"/>
    <property type="match status" value="1"/>
</dbReference>
<dbReference type="Pfam" id="PF02086">
    <property type="entry name" value="MethyltransfD12"/>
    <property type="match status" value="1"/>
</dbReference>
<dbReference type="PIRSF" id="PIRSF000398">
    <property type="entry name" value="M_m6A_EcoRV"/>
    <property type="match status" value="1"/>
</dbReference>
<dbReference type="PRINTS" id="PR00505">
    <property type="entry name" value="D12N6MTFRASE"/>
</dbReference>
<dbReference type="SUPFAM" id="SSF53335">
    <property type="entry name" value="S-adenosyl-L-methionine-dependent methyltransferases"/>
    <property type="match status" value="1"/>
</dbReference>
<dbReference type="PROSITE" id="PS00092">
    <property type="entry name" value="N6_MTASE"/>
    <property type="match status" value="1"/>
</dbReference>
<proteinExistence type="inferred from homology"/>
<protein>
    <recommendedName>
        <fullName>DNA adenine methylase</fullName>
        <ecNumber>2.1.1.72</ecNumber>
    </recommendedName>
    <alternativeName>
        <fullName>DNA adenine methyltransferase</fullName>
    </alternativeName>
    <alternativeName>
        <fullName>Deoxyadenosyl-methyltransferase</fullName>
    </alternativeName>
    <alternativeName>
        <fullName evidence="4">Orphan methyltransferase M.StyDam</fullName>
        <shortName evidence="4">M.StyDam</shortName>
    </alternativeName>
</protein>
<sequence>MKKNRAFLKWAGGKYPLLDDIKRHLPKGECLVEPFVGAGSVFLNTDFSRYILADINSDLISLYNIVKLRTDEYVQASRELFMPETNQAEVYYQLREEFNTCQDPFRRAVLFLYLNRYGYNGLCRYNLRGEFNVPFGRYKRPYFPEAELYHFAEKAQNAFFYCESYADSMARADKSSVVYCDPPYAPLSATANFTAYHTNSFSLTQQAHLAEIAENLVSNRIPVLISNHDTALTREWYQLAKLHVVKVRRSISSNGGTRKKVDELLALYQPGVATPARK</sequence>
<gene>
    <name type="primary">dam</name>
    <name type="ordered locus">STM3484</name>
</gene>
<accession>P0DMP3</accession>
<accession>P0A291</accession>
<accession>P55893</accession>
<feature type="chain" id="PRO_0000087994" description="DNA adenine methylase">
    <location>
        <begin position="1"/>
        <end position="278"/>
    </location>
</feature>
<feature type="binding site" evidence="1">
    <location>
        <position position="10"/>
    </location>
    <ligand>
        <name>S-adenosyl-L-methionine</name>
        <dbReference type="ChEBI" id="CHEBI:59789"/>
    </ligand>
</feature>
<feature type="binding site" evidence="1">
    <location>
        <position position="14"/>
    </location>
    <ligand>
        <name>S-adenosyl-L-methionine</name>
        <dbReference type="ChEBI" id="CHEBI:59789"/>
    </ligand>
</feature>
<feature type="binding site" evidence="1">
    <location>
        <position position="54"/>
    </location>
    <ligand>
        <name>S-adenosyl-L-methionine</name>
        <dbReference type="ChEBI" id="CHEBI:59789"/>
    </ligand>
</feature>
<feature type="binding site" evidence="1">
    <location>
        <position position="181"/>
    </location>
    <ligand>
        <name>S-adenosyl-L-methionine</name>
        <dbReference type="ChEBI" id="CHEBI:59789"/>
    </ligand>
</feature>
<comment type="function">
    <text evidence="2 3 4">An alpha subtype methylase, recognizes the double-stranded sequence 5'-GATC-3' and methylates A-2 (By similarity) (PubMed:12654995). May be involved in methyl-directed DNA mismatch repair, initiation of chromosome replication and gene expression (By similarity).</text>
</comment>
<comment type="catalytic activity">
    <reaction>
        <text>a 2'-deoxyadenosine in DNA + S-adenosyl-L-methionine = an N(6)-methyl-2'-deoxyadenosine in DNA + S-adenosyl-L-homocysteine + H(+)</text>
        <dbReference type="Rhea" id="RHEA:15197"/>
        <dbReference type="Rhea" id="RHEA-COMP:12418"/>
        <dbReference type="Rhea" id="RHEA-COMP:12419"/>
        <dbReference type="ChEBI" id="CHEBI:15378"/>
        <dbReference type="ChEBI" id="CHEBI:57856"/>
        <dbReference type="ChEBI" id="CHEBI:59789"/>
        <dbReference type="ChEBI" id="CHEBI:90615"/>
        <dbReference type="ChEBI" id="CHEBI:90616"/>
        <dbReference type="EC" id="2.1.1.72"/>
    </reaction>
</comment>
<comment type="similarity">
    <text evidence="5">Belongs to the N(4)/N(6)-methyltransferase family.</text>
</comment>
<keyword id="KW-0235">DNA replication</keyword>
<keyword id="KW-0238">DNA-binding</keyword>
<keyword id="KW-0489">Methyltransferase</keyword>
<keyword id="KW-1185">Reference proteome</keyword>
<keyword id="KW-0949">S-adenosyl-L-methionine</keyword>
<keyword id="KW-0808">Transferase</keyword>
<name>DMA_SALTY</name>
<organism>
    <name type="scientific">Salmonella typhimurium (strain LT2 / SGSC1412 / ATCC 700720)</name>
    <dbReference type="NCBI Taxonomy" id="99287"/>
    <lineage>
        <taxon>Bacteria</taxon>
        <taxon>Pseudomonadati</taxon>
        <taxon>Pseudomonadota</taxon>
        <taxon>Gammaproteobacteria</taxon>
        <taxon>Enterobacterales</taxon>
        <taxon>Enterobacteriaceae</taxon>
        <taxon>Salmonella</taxon>
    </lineage>
</organism>